<name>TRM5_ASPFU</name>
<accession>Q4WX30</accession>
<evidence type="ECO:0000255" key="1">
    <source>
        <dbReference type="HAMAP-Rule" id="MF_03152"/>
    </source>
</evidence>
<evidence type="ECO:0000305" key="2"/>
<reference key="1">
    <citation type="journal article" date="2005" name="Nature">
        <title>Genomic sequence of the pathogenic and allergenic filamentous fungus Aspergillus fumigatus.</title>
        <authorList>
            <person name="Nierman W.C."/>
            <person name="Pain A."/>
            <person name="Anderson M.J."/>
            <person name="Wortman J.R."/>
            <person name="Kim H.S."/>
            <person name="Arroyo J."/>
            <person name="Berriman M."/>
            <person name="Abe K."/>
            <person name="Archer D.B."/>
            <person name="Bermejo C."/>
            <person name="Bennett J.W."/>
            <person name="Bowyer P."/>
            <person name="Chen D."/>
            <person name="Collins M."/>
            <person name="Coulsen R."/>
            <person name="Davies R."/>
            <person name="Dyer P.S."/>
            <person name="Farman M.L."/>
            <person name="Fedorova N."/>
            <person name="Fedorova N.D."/>
            <person name="Feldblyum T.V."/>
            <person name="Fischer R."/>
            <person name="Fosker N."/>
            <person name="Fraser A."/>
            <person name="Garcia J.L."/>
            <person name="Garcia M.J."/>
            <person name="Goble A."/>
            <person name="Goldman G.H."/>
            <person name="Gomi K."/>
            <person name="Griffith-Jones S."/>
            <person name="Gwilliam R."/>
            <person name="Haas B.J."/>
            <person name="Haas H."/>
            <person name="Harris D.E."/>
            <person name="Horiuchi H."/>
            <person name="Huang J."/>
            <person name="Humphray S."/>
            <person name="Jimenez J."/>
            <person name="Keller N."/>
            <person name="Khouri H."/>
            <person name="Kitamoto K."/>
            <person name="Kobayashi T."/>
            <person name="Konzack S."/>
            <person name="Kulkarni R."/>
            <person name="Kumagai T."/>
            <person name="Lafton A."/>
            <person name="Latge J.-P."/>
            <person name="Li W."/>
            <person name="Lord A."/>
            <person name="Lu C."/>
            <person name="Majoros W.H."/>
            <person name="May G.S."/>
            <person name="Miller B.L."/>
            <person name="Mohamoud Y."/>
            <person name="Molina M."/>
            <person name="Monod M."/>
            <person name="Mouyna I."/>
            <person name="Mulligan S."/>
            <person name="Murphy L.D."/>
            <person name="O'Neil S."/>
            <person name="Paulsen I."/>
            <person name="Penalva M.A."/>
            <person name="Pertea M."/>
            <person name="Price C."/>
            <person name="Pritchard B.L."/>
            <person name="Quail M.A."/>
            <person name="Rabbinowitsch E."/>
            <person name="Rawlins N."/>
            <person name="Rajandream M.A."/>
            <person name="Reichard U."/>
            <person name="Renauld H."/>
            <person name="Robson G.D."/>
            <person name="Rodriguez de Cordoba S."/>
            <person name="Rodriguez-Pena J.M."/>
            <person name="Ronning C.M."/>
            <person name="Rutter S."/>
            <person name="Salzberg S.L."/>
            <person name="Sanchez M."/>
            <person name="Sanchez-Ferrero J.C."/>
            <person name="Saunders D."/>
            <person name="Seeger K."/>
            <person name="Squares R."/>
            <person name="Squares S."/>
            <person name="Takeuchi M."/>
            <person name="Tekaia F."/>
            <person name="Turner G."/>
            <person name="Vazquez de Aldana C.R."/>
            <person name="Weidman J."/>
            <person name="White O."/>
            <person name="Woodward J.R."/>
            <person name="Yu J.-H."/>
            <person name="Fraser C.M."/>
            <person name="Galagan J.E."/>
            <person name="Asai K."/>
            <person name="Machida M."/>
            <person name="Hall N."/>
            <person name="Barrell B.G."/>
            <person name="Denning D.W."/>
        </authorList>
    </citation>
    <scope>NUCLEOTIDE SEQUENCE [LARGE SCALE GENOMIC DNA]</scope>
    <source>
        <strain>ATCC MYA-4609 / CBS 101355 / FGSC A1100 / Af293</strain>
    </source>
</reference>
<protein>
    <recommendedName>
        <fullName evidence="1">tRNA (guanine(37)-N(1))-methyltransferase</fullName>
        <ecNumber evidence="1">2.1.1.228</ecNumber>
    </recommendedName>
    <alternativeName>
        <fullName evidence="1">M1G-methyltransferase</fullName>
    </alternativeName>
    <alternativeName>
        <fullName evidence="1">tRNA [GM37] methyltransferase</fullName>
    </alternativeName>
    <alternativeName>
        <fullName evidence="1">tRNA methyltransferase 5</fullName>
    </alternativeName>
</protein>
<gene>
    <name type="primary">trm5</name>
    <name type="ORF">AFUA_3G08030</name>
</gene>
<organism>
    <name type="scientific">Aspergillus fumigatus (strain ATCC MYA-4609 / CBS 101355 / FGSC A1100 / Af293)</name>
    <name type="common">Neosartorya fumigata</name>
    <dbReference type="NCBI Taxonomy" id="330879"/>
    <lineage>
        <taxon>Eukaryota</taxon>
        <taxon>Fungi</taxon>
        <taxon>Dikarya</taxon>
        <taxon>Ascomycota</taxon>
        <taxon>Pezizomycotina</taxon>
        <taxon>Eurotiomycetes</taxon>
        <taxon>Eurotiomycetidae</taxon>
        <taxon>Eurotiales</taxon>
        <taxon>Aspergillaceae</taxon>
        <taxon>Aspergillus</taxon>
        <taxon>Aspergillus subgen. Fumigati</taxon>
    </lineage>
</organism>
<comment type="function">
    <text evidence="1">Specifically methylates the N1 position of guanosine-37 in various cytoplasmic and mitochondrial tRNAs. Methylation is not dependent on the nature of the nucleoside 5' of the target nucleoside. This is the first step in the biosynthesis of wybutosine (yW), a modified base adjacent to the anticodon of tRNAs and required for accurate decoding.</text>
</comment>
<comment type="catalytic activity">
    <reaction evidence="1">
        <text>guanosine(37) in tRNA + S-adenosyl-L-methionine = N(1)-methylguanosine(37) in tRNA + S-adenosyl-L-homocysteine + H(+)</text>
        <dbReference type="Rhea" id="RHEA:36899"/>
        <dbReference type="Rhea" id="RHEA-COMP:10145"/>
        <dbReference type="Rhea" id="RHEA-COMP:10147"/>
        <dbReference type="ChEBI" id="CHEBI:15378"/>
        <dbReference type="ChEBI" id="CHEBI:57856"/>
        <dbReference type="ChEBI" id="CHEBI:59789"/>
        <dbReference type="ChEBI" id="CHEBI:73542"/>
        <dbReference type="ChEBI" id="CHEBI:74269"/>
        <dbReference type="EC" id="2.1.1.228"/>
    </reaction>
</comment>
<comment type="subunit">
    <text evidence="1">Monomer.</text>
</comment>
<comment type="subcellular location">
    <subcellularLocation>
        <location evidence="1">Mitochondrion matrix</location>
    </subcellularLocation>
    <subcellularLocation>
        <location evidence="1">Nucleus</location>
    </subcellularLocation>
    <subcellularLocation>
        <location evidence="1">Cytoplasm</location>
    </subcellularLocation>
    <text evidence="1">Predominantly in the mitochondria and in the nucleus.</text>
</comment>
<comment type="similarity">
    <text evidence="2">Belongs to the class I-like SAM-binding methyltransferase superfamily. TRM5/TYW2 family.</text>
</comment>
<sequence>MDSMTDSSNSLRSSDLPEMFRPPVNRAMRVLDRSFFRKTVPLSAAAVFQNSDISKVRAELHKSRDLLAVPRLNCIRDVADQEGQIKKALLLRETVKHDDKETWSPKISELVEKGRIAMRPYDLTLDYDFWTYADIISSILPEDELQEIPQGFTQVGHVLHLNLREQYLPYKYLIAEILKDKNKVIRTVINKTEDVGSHSEFRTFPFELLAGDNDLNVVQHEQDCEFRFDYSRVYWNSRLETEHRRLVEKFNKGEMVCDVMAGVGPFAVPAGKKKIFVWANDLNPHGYEVMQDAIKRNKVEGFVTPFNMDGREFIRWSAKELLETEPVTVTIHPKVRRDRKSGNKVEQAPPPHPEEYHRPVFFDHYVMNLPATAIEFLDAFPGIYAGKESLFAPHTSQRLPMVHVYCFSGHSENELDDHIDICQRISERIGYTITPEDRIGGSGNQSVELSIHNVRLVSPKKQMFCASFRLPAEVAFKKV</sequence>
<proteinExistence type="inferred from homology"/>
<keyword id="KW-0963">Cytoplasm</keyword>
<keyword id="KW-0489">Methyltransferase</keyword>
<keyword id="KW-0496">Mitochondrion</keyword>
<keyword id="KW-0539">Nucleus</keyword>
<keyword id="KW-1185">Reference proteome</keyword>
<keyword id="KW-0949">S-adenosyl-L-methionine</keyword>
<keyword id="KW-0808">Transferase</keyword>
<keyword id="KW-0819">tRNA processing</keyword>
<dbReference type="EC" id="2.1.1.228" evidence="1"/>
<dbReference type="EMBL" id="AAHF01000002">
    <property type="protein sequence ID" value="EAL92773.1"/>
    <property type="molecule type" value="Genomic_DNA"/>
</dbReference>
<dbReference type="RefSeq" id="XP_754811.1">
    <property type="nucleotide sequence ID" value="XM_749718.1"/>
</dbReference>
<dbReference type="SMR" id="Q4WX30"/>
<dbReference type="FunCoup" id="Q4WX30">
    <property type="interactions" value="1108"/>
</dbReference>
<dbReference type="STRING" id="330879.Q4WX30"/>
<dbReference type="EnsemblFungi" id="EAL92773">
    <property type="protein sequence ID" value="EAL92773"/>
    <property type="gene ID" value="AFUA_3G08030"/>
</dbReference>
<dbReference type="GeneID" id="3512394"/>
<dbReference type="KEGG" id="afm:AFUA_3G08030"/>
<dbReference type="VEuPathDB" id="FungiDB:Afu3g08030"/>
<dbReference type="eggNOG" id="KOG2078">
    <property type="taxonomic scope" value="Eukaryota"/>
</dbReference>
<dbReference type="HOGENOM" id="CLU_022610_2_2_1"/>
<dbReference type="InParanoid" id="Q4WX30"/>
<dbReference type="OMA" id="VGSHSQF"/>
<dbReference type="OrthoDB" id="408788at2759"/>
<dbReference type="Proteomes" id="UP000002530">
    <property type="component" value="Chromosome 3"/>
</dbReference>
<dbReference type="GO" id="GO:0005737">
    <property type="term" value="C:cytoplasm"/>
    <property type="evidence" value="ECO:0000318"/>
    <property type="project" value="GO_Central"/>
</dbReference>
<dbReference type="GO" id="GO:0005759">
    <property type="term" value="C:mitochondrial matrix"/>
    <property type="evidence" value="ECO:0000318"/>
    <property type="project" value="GO_Central"/>
</dbReference>
<dbReference type="GO" id="GO:0005634">
    <property type="term" value="C:nucleus"/>
    <property type="evidence" value="ECO:0007669"/>
    <property type="project" value="UniProtKB-SubCell"/>
</dbReference>
<dbReference type="GO" id="GO:0052906">
    <property type="term" value="F:tRNA (guanine(37)-N1)-methyltransferase activity"/>
    <property type="evidence" value="ECO:0007669"/>
    <property type="project" value="UniProtKB-UniRule"/>
</dbReference>
<dbReference type="GO" id="GO:0008175">
    <property type="term" value="F:tRNA methyltransferase activity"/>
    <property type="evidence" value="ECO:0000318"/>
    <property type="project" value="GO_Central"/>
</dbReference>
<dbReference type="GO" id="GO:0070901">
    <property type="term" value="P:mitochondrial tRNA methylation"/>
    <property type="evidence" value="ECO:0000318"/>
    <property type="project" value="GO_Central"/>
</dbReference>
<dbReference type="GO" id="GO:0002939">
    <property type="term" value="P:tRNA N1-guanine methylation"/>
    <property type="evidence" value="ECO:0000318"/>
    <property type="project" value="GO_Central"/>
</dbReference>
<dbReference type="FunFam" id="3.30.300.110:FF:000001">
    <property type="entry name" value="tRNA (guanine(37)-N1)-methyltransferase"/>
    <property type="match status" value="1"/>
</dbReference>
<dbReference type="Gene3D" id="3.30.300.110">
    <property type="entry name" value="Met-10+ protein-like domains"/>
    <property type="match status" value="1"/>
</dbReference>
<dbReference type="Gene3D" id="3.40.50.150">
    <property type="entry name" value="Vaccinia Virus protein VP39"/>
    <property type="match status" value="1"/>
</dbReference>
<dbReference type="HAMAP" id="MF_03152">
    <property type="entry name" value="TRM5"/>
    <property type="match status" value="1"/>
</dbReference>
<dbReference type="InterPro" id="IPR030382">
    <property type="entry name" value="MeTrfase_TRM5/TYW2"/>
</dbReference>
<dbReference type="InterPro" id="IPR029063">
    <property type="entry name" value="SAM-dependent_MTases_sf"/>
</dbReference>
<dbReference type="InterPro" id="IPR056743">
    <property type="entry name" value="TRM5-TYW2-like_MTfase"/>
</dbReference>
<dbReference type="InterPro" id="IPR056744">
    <property type="entry name" value="TRM5/TYW2-like_N"/>
</dbReference>
<dbReference type="InterPro" id="IPR025792">
    <property type="entry name" value="tRNA_Gua_MeTrfase_euk"/>
</dbReference>
<dbReference type="PANTHER" id="PTHR23245:SF36">
    <property type="entry name" value="TRNA (GUANINE(37)-N1)-METHYLTRANSFERASE"/>
    <property type="match status" value="1"/>
</dbReference>
<dbReference type="PANTHER" id="PTHR23245">
    <property type="entry name" value="TRNA METHYLTRANSFERASE"/>
    <property type="match status" value="1"/>
</dbReference>
<dbReference type="Pfam" id="PF02475">
    <property type="entry name" value="TRM5-TYW2_MTfase"/>
    <property type="match status" value="1"/>
</dbReference>
<dbReference type="Pfam" id="PF25133">
    <property type="entry name" value="TYW2_N_2"/>
    <property type="match status" value="1"/>
</dbReference>
<dbReference type="SUPFAM" id="SSF53335">
    <property type="entry name" value="S-adenosyl-L-methionine-dependent methyltransferases"/>
    <property type="match status" value="1"/>
</dbReference>
<dbReference type="PROSITE" id="PS51684">
    <property type="entry name" value="SAM_MT_TRM5_TYW2"/>
    <property type="match status" value="1"/>
</dbReference>
<feature type="chain" id="PRO_0000414167" description="tRNA (guanine(37)-N(1))-methyltransferase">
    <location>
        <begin position="1"/>
        <end position="479"/>
    </location>
</feature>
<feature type="binding site" evidence="1">
    <location>
        <position position="243"/>
    </location>
    <ligand>
        <name>S-adenosyl-L-methionine</name>
        <dbReference type="ChEBI" id="CHEBI:59789"/>
    </ligand>
</feature>
<feature type="binding site" evidence="1">
    <location>
        <begin position="281"/>
        <end position="282"/>
    </location>
    <ligand>
        <name>S-adenosyl-L-methionine</name>
        <dbReference type="ChEBI" id="CHEBI:59789"/>
    </ligand>
</feature>
<feature type="binding site" evidence="1">
    <location>
        <begin position="309"/>
        <end position="310"/>
    </location>
    <ligand>
        <name>S-adenosyl-L-methionine</name>
        <dbReference type="ChEBI" id="CHEBI:59789"/>
    </ligand>
</feature>
<feature type="binding site" evidence="1">
    <location>
        <position position="368"/>
    </location>
    <ligand>
        <name>S-adenosyl-L-methionine</name>
        <dbReference type="ChEBI" id="CHEBI:59789"/>
    </ligand>
</feature>